<name>Y218A_MYCGE</name>
<sequence>MVNNEYQQLNTLVESDDEADLVIANLVKQLNELKQILVSLDNQEASATAVTDKKEEEYNQNQSSFHNFSKETLQKQAKRGFLLLERCSLVGLQQLELEYVNLLGRSFDSYQQKTELLNNLKELVDEHFSDTEKIINTLEKIFDVIGGSEYTPVLNSFFNKLLSDPDPIQREIGLRQFIITLRQRFKKLSQKIDSSLKQIETEAKIATEQVQNSEVMFGPPDIANDHELNLNWPDSETDAILSSMENELEAALLAKHQEEPPLIVTPPSLIKPTVSQPEVEVVTPTNNTNFQPQVDLKPTDLKKQQKKKPLNFITRPVFKSNLPPKLSKDDIVHYAHQLLEKNTHNE</sequence>
<keyword id="KW-0002">3D-structure</keyword>
<keyword id="KW-1185">Reference proteome</keyword>
<reference key="1">
    <citation type="journal article" date="1995" name="Science">
        <title>The minimal gene complement of Mycoplasma genitalium.</title>
        <authorList>
            <person name="Fraser C.M."/>
            <person name="Gocayne J.D."/>
            <person name="White O."/>
            <person name="Adams M.D."/>
            <person name="Clayton R.A."/>
            <person name="Fleischmann R.D."/>
            <person name="Bult C.J."/>
            <person name="Kerlavage A.R."/>
            <person name="Sutton G.G."/>
            <person name="Kelley J.M."/>
            <person name="Fritchman J.L."/>
            <person name="Weidman J.F."/>
            <person name="Small K.V."/>
            <person name="Sandusky M."/>
            <person name="Fuhrmann J.L."/>
            <person name="Nguyen D.T."/>
            <person name="Utterback T.R."/>
            <person name="Saudek D.M."/>
            <person name="Phillips C.A."/>
            <person name="Merrick J.M."/>
            <person name="Tomb J.-F."/>
            <person name="Dougherty B.A."/>
            <person name="Bott K.F."/>
            <person name="Hu P.-C."/>
            <person name="Lucier T.S."/>
            <person name="Peterson S.N."/>
            <person name="Smith H.O."/>
            <person name="Hutchison C.A. III"/>
            <person name="Venter J.C."/>
        </authorList>
    </citation>
    <scope>NUCLEOTIDE SEQUENCE [LARGE SCALE GENOMIC DNA]</scope>
    <source>
        <strain>ATCC 33530 / DSM 19775 / NCTC 10195 / G37</strain>
    </source>
</reference>
<reference key="2">
    <citation type="submission" date="1998-10" db="EMBL/GenBank/DDBJ databases">
        <authorList>
            <person name="Fraser C.M."/>
            <person name="Gocayne J.D."/>
            <person name="White O."/>
            <person name="Adams M.D."/>
            <person name="Clayton R.A."/>
            <person name="Fleischmann R.D."/>
            <person name="Bult C.J."/>
            <person name="Kerlavage A.R."/>
            <person name="Sutton G.G."/>
            <person name="Kelley J.M."/>
            <person name="Fritchman J.L."/>
            <person name="Weidman J.F."/>
            <person name="Small K.V."/>
            <person name="Sandusky M."/>
            <person name="Fuhrmann J.L."/>
            <person name="Nguyen D.T."/>
            <person name="Utterback T.R."/>
            <person name="Saudek D.M."/>
            <person name="Phillips C.A."/>
            <person name="Merrick J.M."/>
            <person name="Tomb J.-F."/>
            <person name="Dougherty B.A."/>
            <person name="Bott K.F."/>
            <person name="Hu P.-C."/>
            <person name="Lucier T.S."/>
            <person name="Peterson S.N."/>
            <person name="Smith H.O."/>
            <person name="Hutchison C.A. III"/>
            <person name="Venter J.C."/>
        </authorList>
    </citation>
    <scope>IDENTIFICATION</scope>
</reference>
<accession>Q9ZB78</accession>
<organism>
    <name type="scientific">Mycoplasma genitalium (strain ATCC 33530 / DSM 19775 / NCTC 10195 / G37)</name>
    <name type="common">Mycoplasmoides genitalium</name>
    <dbReference type="NCBI Taxonomy" id="243273"/>
    <lineage>
        <taxon>Bacteria</taxon>
        <taxon>Bacillati</taxon>
        <taxon>Mycoplasmatota</taxon>
        <taxon>Mycoplasmoidales</taxon>
        <taxon>Mycoplasmoidaceae</taxon>
        <taxon>Mycoplasmoides</taxon>
    </lineage>
</organism>
<proteinExistence type="evidence at protein level"/>
<protein>
    <recommendedName>
        <fullName>Uncharacterized protein MG218.1</fullName>
    </recommendedName>
</protein>
<evidence type="ECO:0007829" key="1">
    <source>
        <dbReference type="PDB" id="4XNG"/>
    </source>
</evidence>
<feature type="chain" id="PRO_0000210460" description="Uncharacterized protein MG218.1">
    <location>
        <begin position="1"/>
        <end position="346"/>
    </location>
</feature>
<feature type="helix" evidence="1">
    <location>
        <begin position="70"/>
        <end position="86"/>
    </location>
</feature>
<feature type="helix" evidence="1">
    <location>
        <begin position="88"/>
        <end position="104"/>
    </location>
</feature>
<feature type="helix" evidence="1">
    <location>
        <begin position="111"/>
        <end position="145"/>
    </location>
</feature>
<feature type="helix" evidence="1">
    <location>
        <begin position="160"/>
        <end position="163"/>
    </location>
</feature>
<feature type="helix" evidence="1">
    <location>
        <begin position="167"/>
        <end position="202"/>
    </location>
</feature>
<dbReference type="EMBL" id="L43967">
    <property type="protein sequence ID" value="AAC71439.1"/>
    <property type="molecule type" value="Genomic_DNA"/>
</dbReference>
<dbReference type="RefSeq" id="WP_010869378.1">
    <property type="nucleotide sequence ID" value="NC_000908.2"/>
</dbReference>
<dbReference type="PDB" id="4XNG">
    <property type="method" value="X-ray"/>
    <property type="resolution" value="3.00 A"/>
    <property type="chains" value="A/B/C/D=63-204"/>
</dbReference>
<dbReference type="PDBsum" id="4XNG"/>
<dbReference type="SMR" id="Q9ZB78"/>
<dbReference type="STRING" id="243273.MG_491"/>
<dbReference type="GeneID" id="88282362"/>
<dbReference type="KEGG" id="mge:MG_491"/>
<dbReference type="eggNOG" id="COG1269">
    <property type="taxonomic scope" value="Bacteria"/>
</dbReference>
<dbReference type="HOGENOM" id="CLU_775731_0_0_14"/>
<dbReference type="InParanoid" id="Q9ZB78"/>
<dbReference type="OrthoDB" id="9960111at2"/>
<dbReference type="BioCyc" id="MGEN243273:G1GJ2-263-MONOMER"/>
<dbReference type="EvolutionaryTrace" id="Q9ZB78"/>
<dbReference type="Proteomes" id="UP000000807">
    <property type="component" value="Chromosome"/>
</dbReference>
<dbReference type="InterPro" id="IPR055086">
    <property type="entry name" value="MG491_central"/>
</dbReference>
<dbReference type="Pfam" id="PF22373">
    <property type="entry name" value="MG491_central"/>
    <property type="match status" value="1"/>
</dbReference>
<gene>
    <name type="ordered locus">MG218.1</name>
</gene>